<organism>
    <name type="scientific">Synechococcus sp. (strain JA-3-3Ab)</name>
    <name type="common">Cyanobacteria bacterium Yellowstone A-Prime</name>
    <dbReference type="NCBI Taxonomy" id="321327"/>
    <lineage>
        <taxon>Bacteria</taxon>
        <taxon>Bacillati</taxon>
        <taxon>Cyanobacteriota</taxon>
        <taxon>Cyanophyceae</taxon>
        <taxon>Synechococcales</taxon>
        <taxon>Synechococcaceae</taxon>
        <taxon>Synechococcus</taxon>
    </lineage>
</organism>
<feature type="chain" id="PRO_1000016470" description="Histidine--tRNA ligase">
    <location>
        <begin position="1"/>
        <end position="419"/>
    </location>
</feature>
<protein>
    <recommendedName>
        <fullName evidence="1">Histidine--tRNA ligase</fullName>
        <ecNumber evidence="1">6.1.1.21</ecNumber>
    </recommendedName>
    <alternativeName>
        <fullName evidence="1">Histidyl-tRNA synthetase</fullName>
        <shortName evidence="1">HisRS</shortName>
    </alternativeName>
</protein>
<keyword id="KW-0030">Aminoacyl-tRNA synthetase</keyword>
<keyword id="KW-0067">ATP-binding</keyword>
<keyword id="KW-0963">Cytoplasm</keyword>
<keyword id="KW-0436">Ligase</keyword>
<keyword id="KW-0547">Nucleotide-binding</keyword>
<keyword id="KW-0648">Protein biosynthesis</keyword>
<accession>Q2JRX6</accession>
<dbReference type="EC" id="6.1.1.21" evidence="1"/>
<dbReference type="EMBL" id="CP000239">
    <property type="protein sequence ID" value="ABD00615.1"/>
    <property type="molecule type" value="Genomic_DNA"/>
</dbReference>
<dbReference type="RefSeq" id="WP_011431288.1">
    <property type="nucleotide sequence ID" value="NC_007775.1"/>
</dbReference>
<dbReference type="SMR" id="Q2JRX6"/>
<dbReference type="STRING" id="321327.CYA_2495"/>
<dbReference type="KEGG" id="cya:CYA_2495"/>
<dbReference type="eggNOG" id="COG0124">
    <property type="taxonomic scope" value="Bacteria"/>
</dbReference>
<dbReference type="HOGENOM" id="CLU_025113_1_1_3"/>
<dbReference type="OrthoDB" id="9800814at2"/>
<dbReference type="Proteomes" id="UP000008818">
    <property type="component" value="Chromosome"/>
</dbReference>
<dbReference type="GO" id="GO:0005737">
    <property type="term" value="C:cytoplasm"/>
    <property type="evidence" value="ECO:0007669"/>
    <property type="project" value="UniProtKB-SubCell"/>
</dbReference>
<dbReference type="GO" id="GO:0005524">
    <property type="term" value="F:ATP binding"/>
    <property type="evidence" value="ECO:0007669"/>
    <property type="project" value="UniProtKB-UniRule"/>
</dbReference>
<dbReference type="GO" id="GO:0004821">
    <property type="term" value="F:histidine-tRNA ligase activity"/>
    <property type="evidence" value="ECO:0007669"/>
    <property type="project" value="UniProtKB-UniRule"/>
</dbReference>
<dbReference type="GO" id="GO:0006427">
    <property type="term" value="P:histidyl-tRNA aminoacylation"/>
    <property type="evidence" value="ECO:0007669"/>
    <property type="project" value="UniProtKB-UniRule"/>
</dbReference>
<dbReference type="CDD" id="cd00773">
    <property type="entry name" value="HisRS-like_core"/>
    <property type="match status" value="1"/>
</dbReference>
<dbReference type="CDD" id="cd00859">
    <property type="entry name" value="HisRS_anticodon"/>
    <property type="match status" value="1"/>
</dbReference>
<dbReference type="FunFam" id="3.30.930.10:FF:000005">
    <property type="entry name" value="Histidine--tRNA ligase"/>
    <property type="match status" value="1"/>
</dbReference>
<dbReference type="Gene3D" id="3.40.50.800">
    <property type="entry name" value="Anticodon-binding domain"/>
    <property type="match status" value="1"/>
</dbReference>
<dbReference type="Gene3D" id="3.30.930.10">
    <property type="entry name" value="Bira Bifunctional Protein, Domain 2"/>
    <property type="match status" value="1"/>
</dbReference>
<dbReference type="HAMAP" id="MF_00127">
    <property type="entry name" value="His_tRNA_synth"/>
    <property type="match status" value="1"/>
</dbReference>
<dbReference type="InterPro" id="IPR006195">
    <property type="entry name" value="aa-tRNA-synth_II"/>
</dbReference>
<dbReference type="InterPro" id="IPR045864">
    <property type="entry name" value="aa-tRNA-synth_II/BPL/LPL"/>
</dbReference>
<dbReference type="InterPro" id="IPR004154">
    <property type="entry name" value="Anticodon-bd"/>
</dbReference>
<dbReference type="InterPro" id="IPR036621">
    <property type="entry name" value="Anticodon-bd_dom_sf"/>
</dbReference>
<dbReference type="InterPro" id="IPR015807">
    <property type="entry name" value="His-tRNA-ligase"/>
</dbReference>
<dbReference type="InterPro" id="IPR041715">
    <property type="entry name" value="HisRS-like_core"/>
</dbReference>
<dbReference type="InterPro" id="IPR004516">
    <property type="entry name" value="HisRS/HisZ"/>
</dbReference>
<dbReference type="InterPro" id="IPR033656">
    <property type="entry name" value="HisRS_anticodon"/>
</dbReference>
<dbReference type="NCBIfam" id="TIGR00442">
    <property type="entry name" value="hisS"/>
    <property type="match status" value="1"/>
</dbReference>
<dbReference type="PANTHER" id="PTHR43707:SF1">
    <property type="entry name" value="HISTIDINE--TRNA LIGASE, MITOCHONDRIAL-RELATED"/>
    <property type="match status" value="1"/>
</dbReference>
<dbReference type="PANTHER" id="PTHR43707">
    <property type="entry name" value="HISTIDYL-TRNA SYNTHETASE"/>
    <property type="match status" value="1"/>
</dbReference>
<dbReference type="Pfam" id="PF03129">
    <property type="entry name" value="HGTP_anticodon"/>
    <property type="match status" value="1"/>
</dbReference>
<dbReference type="Pfam" id="PF13393">
    <property type="entry name" value="tRNA-synt_His"/>
    <property type="match status" value="1"/>
</dbReference>
<dbReference type="PIRSF" id="PIRSF001549">
    <property type="entry name" value="His-tRNA_synth"/>
    <property type="match status" value="1"/>
</dbReference>
<dbReference type="SUPFAM" id="SSF52954">
    <property type="entry name" value="Class II aaRS ABD-related"/>
    <property type="match status" value="1"/>
</dbReference>
<dbReference type="SUPFAM" id="SSF55681">
    <property type="entry name" value="Class II aaRS and biotin synthetases"/>
    <property type="match status" value="1"/>
</dbReference>
<dbReference type="PROSITE" id="PS50862">
    <property type="entry name" value="AA_TRNA_LIGASE_II"/>
    <property type="match status" value="1"/>
</dbReference>
<sequence>MEMIQAVRGTRDILPQEVRLWQQVEASAREILGRANYQEIRTPILELTELFARSIGSATDVVGKEMYSFSTRGEQEVSLRPENTAGVVRAYIQHGLQVAGDVQRLWYCGPMFRYERPQAGRQRQFHQLGVELLGSRDPRADAEVIALAWDLLRAVGAENLTLRLNSLGDPQDRRAYRQALVDYLTPLKEELDLDSQERLVRNPLRILDSKDPHTRTIAEQGPKLPDYLSADSRAFFEQVQAHLQALDIPYELDPYLVRGLDYYTHTAFEIVSPELGSQSTVCGGGRYDGLVEELGGPPTPAVGWAIGLERLVLLLQKKQQEIPPTSVEVYVISRGAKAEAQSLQIAQALRQAGFCTELDLSGSAFSKQFKRASRSGATWAVALGDAEAAAGEVQLKHLPTGQQQTLLQADLVKYLVSQR</sequence>
<name>SYH_SYNJA</name>
<gene>
    <name evidence="1" type="primary">hisS</name>
    <name type="ordered locus">CYA_2495</name>
</gene>
<evidence type="ECO:0000255" key="1">
    <source>
        <dbReference type="HAMAP-Rule" id="MF_00127"/>
    </source>
</evidence>
<comment type="catalytic activity">
    <reaction evidence="1">
        <text>tRNA(His) + L-histidine + ATP = L-histidyl-tRNA(His) + AMP + diphosphate + H(+)</text>
        <dbReference type="Rhea" id="RHEA:17313"/>
        <dbReference type="Rhea" id="RHEA-COMP:9665"/>
        <dbReference type="Rhea" id="RHEA-COMP:9689"/>
        <dbReference type="ChEBI" id="CHEBI:15378"/>
        <dbReference type="ChEBI" id="CHEBI:30616"/>
        <dbReference type="ChEBI" id="CHEBI:33019"/>
        <dbReference type="ChEBI" id="CHEBI:57595"/>
        <dbReference type="ChEBI" id="CHEBI:78442"/>
        <dbReference type="ChEBI" id="CHEBI:78527"/>
        <dbReference type="ChEBI" id="CHEBI:456215"/>
        <dbReference type="EC" id="6.1.1.21"/>
    </reaction>
</comment>
<comment type="subunit">
    <text evidence="1">Homodimer.</text>
</comment>
<comment type="subcellular location">
    <subcellularLocation>
        <location evidence="1">Cytoplasm</location>
    </subcellularLocation>
</comment>
<comment type="similarity">
    <text evidence="1">Belongs to the class-II aminoacyl-tRNA synthetase family.</text>
</comment>
<reference key="1">
    <citation type="journal article" date="2007" name="ISME J.">
        <title>Population level functional diversity in a microbial community revealed by comparative genomic and metagenomic analyses.</title>
        <authorList>
            <person name="Bhaya D."/>
            <person name="Grossman A.R."/>
            <person name="Steunou A.-S."/>
            <person name="Khuri N."/>
            <person name="Cohan F.M."/>
            <person name="Hamamura N."/>
            <person name="Melendrez M.C."/>
            <person name="Bateson M.M."/>
            <person name="Ward D.M."/>
            <person name="Heidelberg J.F."/>
        </authorList>
    </citation>
    <scope>NUCLEOTIDE SEQUENCE [LARGE SCALE GENOMIC DNA]</scope>
    <source>
        <strain>JA-3-3Ab</strain>
    </source>
</reference>
<proteinExistence type="inferred from homology"/>